<reference evidence="4 5" key="1">
    <citation type="journal article" date="2008" name="J. Struct. Biol.">
        <title>Atomic resolution structure of cucurmosin, a novel type 1 ribosome-inactivating protein from the sarcocarp of Cucurbita moschata.</title>
        <authorList>
            <person name="Hou X."/>
            <person name="Meehan E.J."/>
            <person name="Xie J."/>
            <person name="Huang M."/>
            <person name="Chen M."/>
            <person name="Chen L."/>
        </authorList>
    </citation>
    <scope>NUCLEOTIDE SEQUENCE [GENOMIC DNA] OF 1-236</scope>
    <scope>PROTEIN SEQUENCE OF 1-27</scope>
    <scope>X-RAY CRYSTALLOGRAPHY (1.0 ANGSTROMS)</scope>
    <scope>FUNCTION</scope>
    <scope>CATALYTIC ACTIVITY</scope>
    <scope>GLYCOSYLATION AT ASN-225</scope>
    <scope>ACTIVE SITES</scope>
    <source>
        <tissue evidence="2">Mesocarp</tissue>
    </source>
</reference>
<keyword id="KW-0002">3D-structure</keyword>
<keyword id="KW-0903">Direct protein sequencing</keyword>
<keyword id="KW-0325">Glycoprotein</keyword>
<keyword id="KW-0378">Hydrolase</keyword>
<keyword id="KW-0611">Plant defense</keyword>
<keyword id="KW-0652">Protein synthesis inhibitor</keyword>
<keyword id="KW-0800">Toxin</keyword>
<accession>P84531</accession>
<accession>B7SK17</accession>
<comment type="function">
    <text evidence="2">Has cytotoxic activity towards cancer cells, but not normal cells. Inhibits the growth of the human leukemia cell line K562, the murine melanoma cell line B16 and the lung adenocarcinoma cell line A549 with IC(50) values of 88.1 nM, 63.4 nM and 359.3 nM respectively.</text>
</comment>
<comment type="catalytic activity">
    <reaction evidence="2">
        <text>Endohydrolysis of the N-glycosidic bond at one specific adenosine on the 28S rRNA.</text>
        <dbReference type="EC" id="3.2.2.22"/>
    </reaction>
</comment>
<comment type="PTM">
    <text evidence="2">The N-linked glycan consists of GlcNAc2Man3Xyl.</text>
</comment>
<comment type="similarity">
    <text evidence="1">Belongs to the ribosome-inactivating protein family. Type 1 RIP subfamily.</text>
</comment>
<proteinExistence type="evidence at protein level"/>
<evidence type="ECO:0000255" key="1"/>
<evidence type="ECO:0000269" key="2">
    <source>
    </source>
</evidence>
<evidence type="ECO:0000303" key="3">
    <source>
    </source>
</evidence>
<evidence type="ECO:0000305" key="4"/>
<evidence type="ECO:0000312" key="5">
    <source>
        <dbReference type="EMBL" id="ABY47624.1"/>
    </source>
</evidence>
<protein>
    <recommendedName>
        <fullName evidence="3">Ribosome-inactivating protein cucurmosin</fullName>
        <ecNumber>3.2.2.22</ecNumber>
    </recommendedName>
    <alternativeName>
        <fullName evidence="3">rRNA N-glycosidase</fullName>
    </alternativeName>
</protein>
<organism>
    <name type="scientific">Cucurbita moschata</name>
    <name type="common">Winter crookneck squash</name>
    <name type="synonym">Cucurbita pepo var. moschata</name>
    <dbReference type="NCBI Taxonomy" id="3662"/>
    <lineage>
        <taxon>Eukaryota</taxon>
        <taxon>Viridiplantae</taxon>
        <taxon>Streptophyta</taxon>
        <taxon>Embryophyta</taxon>
        <taxon>Tracheophyta</taxon>
        <taxon>Spermatophyta</taxon>
        <taxon>Magnoliopsida</taxon>
        <taxon>eudicotyledons</taxon>
        <taxon>Gunneridae</taxon>
        <taxon>Pentapetalae</taxon>
        <taxon>rosids</taxon>
        <taxon>fabids</taxon>
        <taxon>Cucurbitales</taxon>
        <taxon>Cucurbitaceae</taxon>
        <taxon>Cucurbiteae</taxon>
        <taxon>Cucurbita</taxon>
    </lineage>
</organism>
<feature type="chain" id="PRO_0000221398" description="Ribosome-inactivating protein cucurmosin">
    <location>
        <begin position="1"/>
        <end position="244"/>
    </location>
</feature>
<feature type="active site" evidence="2">
    <location>
        <position position="70"/>
    </location>
</feature>
<feature type="active site" evidence="2">
    <location>
        <position position="109"/>
    </location>
</feature>
<feature type="active site" evidence="2">
    <location>
        <position position="158"/>
    </location>
</feature>
<feature type="active site" evidence="2">
    <location>
        <position position="161"/>
    </location>
</feature>
<feature type="glycosylation site" description="N-linked (GlcNAc...) asparagine" evidence="1">
    <location>
        <position position="189"/>
    </location>
</feature>
<feature type="glycosylation site" description="N-linked (GlcNAc...) asparagine" evidence="2">
    <location>
        <position position="225"/>
    </location>
</feature>
<name>RIP_CUCMO</name>
<sequence>NVRFDLSSATSSSYKTFIKNLREALPKDGKVYDIPVLLSTVMDSRRFILIDLVNYDGQSITAAIDVLNVYIVAYSTGTVSYFFQQVPAQAPKLLFKGTQQRTLPYTGNYENLQTAAKKLRENIELGLPALDSAITTLFHYNAEAAASALLVLIQTTSEAARFRYIELQIANNVGTKFKPSQTIISLENNWSALSKQIQIAKNKNGQFETPVILIDPQGNRVQITNVTSNVVTQNIQLLLNIGAT</sequence>
<dbReference type="EC" id="3.2.2.22"/>
<dbReference type="EMBL" id="EU309692">
    <property type="protein sequence ID" value="ABY47624.1"/>
    <property type="molecule type" value="Genomic_DNA"/>
</dbReference>
<dbReference type="PDB" id="3BWH">
    <property type="method" value="X-ray"/>
    <property type="resolution" value="1.00 A"/>
    <property type="chains" value="A=1-244"/>
</dbReference>
<dbReference type="PDBsum" id="3BWH"/>
<dbReference type="SMR" id="P84531"/>
<dbReference type="iPTMnet" id="P84531"/>
<dbReference type="Proteomes" id="UP000504609">
    <property type="component" value="Unplaced"/>
</dbReference>
<dbReference type="GO" id="GO:0030598">
    <property type="term" value="F:rRNA N-glycosylase activity"/>
    <property type="evidence" value="ECO:0007669"/>
    <property type="project" value="UniProtKB-EC"/>
</dbReference>
<dbReference type="GO" id="GO:0090729">
    <property type="term" value="F:toxin activity"/>
    <property type="evidence" value="ECO:0007669"/>
    <property type="project" value="UniProtKB-KW"/>
</dbReference>
<dbReference type="GO" id="GO:0006952">
    <property type="term" value="P:defense response"/>
    <property type="evidence" value="ECO:0007669"/>
    <property type="project" value="UniProtKB-KW"/>
</dbReference>
<dbReference type="GO" id="GO:0017148">
    <property type="term" value="P:negative regulation of translation"/>
    <property type="evidence" value="ECO:0007669"/>
    <property type="project" value="UniProtKB-KW"/>
</dbReference>
<dbReference type="Gene3D" id="3.40.420.10">
    <property type="entry name" value="Ricin (A subunit), domain 1"/>
    <property type="match status" value="1"/>
</dbReference>
<dbReference type="Gene3D" id="4.10.470.10">
    <property type="entry name" value="Ricin (A Subunit), domain 2"/>
    <property type="match status" value="1"/>
</dbReference>
<dbReference type="InterPro" id="IPR036041">
    <property type="entry name" value="Ribosome-inact_prot_sf"/>
</dbReference>
<dbReference type="InterPro" id="IPR017989">
    <property type="entry name" value="Ribosome_inactivat_1/2"/>
</dbReference>
<dbReference type="InterPro" id="IPR001574">
    <property type="entry name" value="Ribosome_inactivat_prot"/>
</dbReference>
<dbReference type="InterPro" id="IPR017988">
    <property type="entry name" value="Ribosome_inactivat_prot_CS"/>
</dbReference>
<dbReference type="InterPro" id="IPR016138">
    <property type="entry name" value="Ribosome_inactivat_prot_sub1"/>
</dbReference>
<dbReference type="InterPro" id="IPR016139">
    <property type="entry name" value="Ribosome_inactivat_prot_sub2"/>
</dbReference>
<dbReference type="PANTHER" id="PTHR33453">
    <property type="match status" value="1"/>
</dbReference>
<dbReference type="PANTHER" id="PTHR33453:SF34">
    <property type="entry name" value="RIBOSOME-INACTIVATING PROTEIN"/>
    <property type="match status" value="1"/>
</dbReference>
<dbReference type="Pfam" id="PF00161">
    <property type="entry name" value="RIP"/>
    <property type="match status" value="1"/>
</dbReference>
<dbReference type="PRINTS" id="PR00396">
    <property type="entry name" value="SHIGARICIN"/>
</dbReference>
<dbReference type="SUPFAM" id="SSF56371">
    <property type="entry name" value="Ribosome inactivating proteins (RIP)"/>
    <property type="match status" value="1"/>
</dbReference>
<dbReference type="PROSITE" id="PS00275">
    <property type="entry name" value="SHIGA_RICIN"/>
    <property type="match status" value="1"/>
</dbReference>